<evidence type="ECO:0000250" key="1">
    <source>
        <dbReference type="UniProtKB" id="C9K7B9"/>
    </source>
</evidence>
<evidence type="ECO:0000250" key="2">
    <source>
        <dbReference type="UniProtKB" id="K0E2G4"/>
    </source>
</evidence>
<evidence type="ECO:0000250" key="3">
    <source>
        <dbReference type="UniProtKB" id="P20004"/>
    </source>
</evidence>
<evidence type="ECO:0000269" key="4">
    <source>
    </source>
</evidence>
<evidence type="ECO:0000269" key="5">
    <source>
    </source>
</evidence>
<evidence type="ECO:0000269" key="6">
    <source>
    </source>
</evidence>
<evidence type="ECO:0000303" key="7">
    <source>
    </source>
</evidence>
<evidence type="ECO:0000303" key="8">
    <source ref="1"/>
</evidence>
<evidence type="ECO:0000305" key="9"/>
<evidence type="ECO:0000305" key="10">
    <source>
    </source>
</evidence>
<feature type="chain" id="PRO_0000444851" description="Aconitase AMT8-2">
    <location>
        <begin position="1"/>
        <end position="843"/>
    </location>
</feature>
<feature type="binding site" evidence="3">
    <location>
        <begin position="258"/>
        <end position="260"/>
    </location>
    <ligand>
        <name>substrate</name>
    </ligand>
</feature>
<feature type="binding site" evidence="3">
    <location>
        <position position="450"/>
    </location>
    <ligand>
        <name>[4Fe-4S] cluster</name>
        <dbReference type="ChEBI" id="CHEBI:49883"/>
    </ligand>
</feature>
<feature type="binding site" evidence="3">
    <location>
        <position position="513"/>
    </location>
    <ligand>
        <name>[4Fe-4S] cluster</name>
        <dbReference type="ChEBI" id="CHEBI:49883"/>
    </ligand>
</feature>
<feature type="binding site" evidence="3">
    <location>
        <position position="516"/>
    </location>
    <ligand>
        <name>[4Fe-4S] cluster</name>
        <dbReference type="ChEBI" id="CHEBI:49883"/>
    </ligand>
</feature>
<feature type="binding site" evidence="3">
    <location>
        <position position="536"/>
    </location>
    <ligand>
        <name>substrate</name>
    </ligand>
</feature>
<feature type="binding site" evidence="3">
    <location>
        <position position="541"/>
    </location>
    <ligand>
        <name>substrate</name>
    </ligand>
</feature>
<feature type="binding site" evidence="3">
    <location>
        <begin position="712"/>
        <end position="713"/>
    </location>
    <ligand>
        <name>substrate</name>
    </ligand>
</feature>
<gene>
    <name evidence="8" type="primary">AMT8-2</name>
</gene>
<name>AMT82_ALTAL</name>
<sequence>MAAYLFTCSILQTLSEAGKIEIAEDKLLHYLGELPGTPNGPVQLLENICTILEGQGRATHGNVIRHVLNIVVTEQELGGLGISGKSWEEVDEHTLHEIKFLTDAWLTAAESRAAARHLPQPLKQQDTRRLPMNLAEKILAHHAFSVPRRERVVAGDLLRVSIDWVIASELSWVGMKHSVTSLDMKPSAWRNDRFWLSGDHTVDPRTYHDKRVQALIKGLESAKRDLKMTENQGSNYTIMHTEFVRERAEPGMLVLGSDSHTCSAGAVSALAIGLGAGDVMAGLATGETWFKVPECIRINFTGQPAWYIGGKDVILSVLKQLKRNTYAAERIVEFGGAGAKLLSCDARFAISNMCTVRDPNDRPELKPTADDRSTSRNLVLLQAFLFPTVSLNRLSIAAGARYEGASYASTFEIDLGEVEPFIAIYPSPDQVCPVAERTGMRFDGCFIGACTTTEEDLVLAALVLEAGLKRGLTLEKGKRIVVPGSLPIVKNLRALGLLDIYKACGYEQPAPGCSLCLGIGADVAEAGSQWLSSQNRNFQNRMGRGAVGHICSAATVAASSFNMTLTDPCDLLNDVSETTFKEYLARCKVARGGSESKLAGGKQANNVQYIEPCLLGENARSAEGEVPALEAAAVSLDDARLGSINSRIYKLDDYVDTDALPQIIPAPACVGSPTDEMLGSHCFELTNPDFRDYVRSGHRVIVGGRAFGCGSSREEAPRALKGLGVQCVIARSFAFIFGRNMPNIGMLAIVLTDEAFYKAAQQGENIEVDVEGRVVHVAGQTFPFSLDDMELQLIRNRGLAASYQKLGSKVFAALCQKPAPLPISALADATLAQGGSIGRQMDW</sequence>
<protein>
    <recommendedName>
        <fullName evidence="2">Aconitase AMT8-2</fullName>
        <ecNumber evidence="2">4.2.1.-</ecNumber>
    </recommendedName>
    <alternativeName>
        <fullName evidence="8">AM-toxin biosynthesis protein 8-2</fullName>
    </alternativeName>
</protein>
<keyword id="KW-0408">Iron</keyword>
<keyword id="KW-0411">Iron-sulfur</keyword>
<keyword id="KW-0456">Lyase</keyword>
<keyword id="KW-0479">Metal-binding</keyword>
<keyword id="KW-0843">Virulence</keyword>
<comment type="function">
    <text evidence="1 4 5 6 7 10">Aconitase; part of the gene clusters that mediate the biosynthesis of AM-toxins, host-selective toxins (HSTs) causing Alternaria blotch on apple, a worldwide distributed disease (By similarity). AM-toxins are cyclic depsipeptides containing the 3 residues 2-hydroxy-isovaleric acid (2-HIV), dehydroalanine, L-alanine which are common for all 3 AM-toxins I to III. The fourth precursor is L-alpha-amino-methoxyphenyl-valeric acid (L-Amv) for AM-toxin I, L-alpha-amino-phenyl-valeric acid (L-Apv) for AM-toxin II, and L-alpha-amino-hydroxyphenyl-valeric acid (L-Ahv) for AM-toxin III (Probable). AM-toxins have two target sites for affecting susceptible apple cells; they cause invagination of the plasma membrane and electrolyte loss and chloroplast disorganization (PubMed:22846083). The non-ribosomal peptide synthetase AMT1 contains 4 catalytic modules and is responsible for activation of each residue in AM-toxin (PubMed:10875335). The aldo-keto reductase AMT2 catalyzes the conversion of 2-keto-isovaleric acid (2-KIV) to 2-hydroxy-isovaleric acid (2-HIV), one of the precursor residues incorporated by AMT1 during AM-toxin biosynthesis, by reduction of its ketone to an alcohol (PubMed:15066029). The cytochrome P450 monooxygenase AMT3 and the thioesterase AMT4 are also important for AM-toxin production, but their exact function within the AM-toxin biosynthesis are not known yet (PubMed:17990954). Up to 21 proteins (including AMT1 to AMT4) are predicted to be involved in AM-toxin biosynthesis since their expression ishighly up-regulated in AM-toxin-producing cultures (PubMed:17990954).</text>
</comment>
<comment type="pathway">
    <text evidence="1">Mycotoxin biosynthesis.</text>
</comment>
<comment type="miscellaneous">
    <text evidence="6">Gene clusters encoding host-selective toxins (HSTs) are localized on conditionally dispensable chromosomes (CDCs), also called supernumerary chromosomes, where they are present in multiple copies (PubMed:17990954). The CDCs are not essential for saprophytic growth but controls host-selective pathogenicity (PubMed:17990954).</text>
</comment>
<comment type="similarity">
    <text evidence="9">Belongs to the aconitase/IPM isomerase family.</text>
</comment>
<proteinExistence type="inferred from homology"/>
<dbReference type="EC" id="4.2.1.-" evidence="2"/>
<dbReference type="EMBL" id="AB525200">
    <property type="protein sequence ID" value="BAI44807.1"/>
    <property type="molecule type" value="Genomic_DNA"/>
</dbReference>
<dbReference type="SMR" id="C9K7I3"/>
<dbReference type="VEuPathDB" id="FungiDB:CC77DRAFT_1042638"/>
<dbReference type="GO" id="GO:0016836">
    <property type="term" value="F:hydro-lyase activity"/>
    <property type="evidence" value="ECO:0007669"/>
    <property type="project" value="InterPro"/>
</dbReference>
<dbReference type="GO" id="GO:0051536">
    <property type="term" value="F:iron-sulfur cluster binding"/>
    <property type="evidence" value="ECO:0007669"/>
    <property type="project" value="UniProtKB-KW"/>
</dbReference>
<dbReference type="GO" id="GO:0046872">
    <property type="term" value="F:metal ion binding"/>
    <property type="evidence" value="ECO:0007669"/>
    <property type="project" value="UniProtKB-KW"/>
</dbReference>
<dbReference type="GO" id="GO:0170034">
    <property type="term" value="P:L-amino acid biosynthetic process"/>
    <property type="evidence" value="ECO:0007669"/>
    <property type="project" value="UniProtKB-ARBA"/>
</dbReference>
<dbReference type="GO" id="GO:0170038">
    <property type="term" value="P:proteinogenic amino acid biosynthetic process"/>
    <property type="evidence" value="ECO:0007669"/>
    <property type="project" value="UniProtKB-ARBA"/>
</dbReference>
<dbReference type="CDD" id="cd01577">
    <property type="entry name" value="IPMI_Swivel"/>
    <property type="match status" value="1"/>
</dbReference>
<dbReference type="Gene3D" id="3.30.499.10">
    <property type="entry name" value="Aconitase, domain 3"/>
    <property type="match status" value="2"/>
</dbReference>
<dbReference type="Gene3D" id="3.20.19.10">
    <property type="entry name" value="Aconitase, domain 4"/>
    <property type="match status" value="1"/>
</dbReference>
<dbReference type="InterPro" id="IPR015931">
    <property type="entry name" value="Acnase/IPM_dHydase_lsu_aba_1/3"/>
</dbReference>
<dbReference type="InterPro" id="IPR001030">
    <property type="entry name" value="Acoase/IPM_deHydtase_lsu_aba"/>
</dbReference>
<dbReference type="InterPro" id="IPR015928">
    <property type="entry name" value="Aconitase/3IPM_dehydase_swvl"/>
</dbReference>
<dbReference type="InterPro" id="IPR018136">
    <property type="entry name" value="Aconitase_4Fe-4S_BS"/>
</dbReference>
<dbReference type="InterPro" id="IPR036008">
    <property type="entry name" value="Aconitase_4Fe-4S_dom"/>
</dbReference>
<dbReference type="InterPro" id="IPR000573">
    <property type="entry name" value="AconitaseA/IPMdHydase_ssu_swvl"/>
</dbReference>
<dbReference type="InterPro" id="IPR050067">
    <property type="entry name" value="IPM_dehydratase_rel_enz"/>
</dbReference>
<dbReference type="InterPro" id="IPR033940">
    <property type="entry name" value="IPMI_Swivel"/>
</dbReference>
<dbReference type="InterPro" id="IPR011827">
    <property type="entry name" value="LeuD_type2/HacB/DmdB"/>
</dbReference>
<dbReference type="NCBIfam" id="TIGR02087">
    <property type="entry name" value="LEUD_arch"/>
    <property type="match status" value="1"/>
</dbReference>
<dbReference type="PANTHER" id="PTHR43822:SF2">
    <property type="entry name" value="HOMOACONITASE, MITOCHONDRIAL"/>
    <property type="match status" value="1"/>
</dbReference>
<dbReference type="PANTHER" id="PTHR43822">
    <property type="entry name" value="HOMOACONITASE, MITOCHONDRIAL-RELATED"/>
    <property type="match status" value="1"/>
</dbReference>
<dbReference type="Pfam" id="PF00330">
    <property type="entry name" value="Aconitase"/>
    <property type="match status" value="2"/>
</dbReference>
<dbReference type="Pfam" id="PF00694">
    <property type="entry name" value="Aconitase_C"/>
    <property type="match status" value="1"/>
</dbReference>
<dbReference type="PRINTS" id="PR00415">
    <property type="entry name" value="ACONITASE"/>
</dbReference>
<dbReference type="SUPFAM" id="SSF53732">
    <property type="entry name" value="Aconitase iron-sulfur domain"/>
    <property type="match status" value="1"/>
</dbReference>
<dbReference type="SUPFAM" id="SSF52016">
    <property type="entry name" value="LeuD/IlvD-like"/>
    <property type="match status" value="1"/>
</dbReference>
<dbReference type="PROSITE" id="PS01244">
    <property type="entry name" value="ACONITASE_2"/>
    <property type="match status" value="1"/>
</dbReference>
<reference key="1">
    <citation type="submission" date="2009-10" db="EMBL/GenBank/DDBJ databases">
        <title>A Zn(II)2Cys6 transcription regulator encoded by the AMT gene cluster negatively controls AM-toxin production in the apple pathotype of Alternaria alternata.</title>
        <authorList>
            <person name="Harimoto Y."/>
            <person name="Kodama M."/>
            <person name="Yamamoto M."/>
            <person name="Otani H."/>
            <person name="Tsuge T."/>
        </authorList>
    </citation>
    <scope>NUCLEOTIDE SEQUENCE [GENOMIC DNA]</scope>
    <source>
        <strain>NBRC 8984</strain>
    </source>
</reference>
<reference key="2">
    <citation type="journal article" date="2000" name="Mol. Plant Microbe Interact.">
        <title>Cloning and characterization of a cyclic peptide synthetase gene from Alternaria alternata apple pathotype whose product is involved in AM-toxin synthesis and pathogenicity.</title>
        <authorList>
            <person name="Johnson R.D."/>
            <person name="Johnson L."/>
            <person name="Itoh Y."/>
            <person name="Kodama M."/>
            <person name="Otani H."/>
            <person name="Kohmoto K."/>
        </authorList>
    </citation>
    <scope>FUNCTION</scope>
    <source>
        <strain>M-71</strain>
    </source>
</reference>
<reference key="3">
    <citation type="journal article" date="2004" name="Mol. Microbiol.">
        <title>Dissection of the host range of the fungal plant pathogen Alternaria alternata by modification of secondary metabolism.</title>
        <authorList>
            <person name="Ito K."/>
            <person name="Tanaka T."/>
            <person name="Hatta R."/>
            <person name="Yamamoto M."/>
            <person name="Akimitsu K."/>
            <person name="Tsuge T."/>
        </authorList>
    </citation>
    <scope>FUNCTION</scope>
    <source>
        <strain>NBRC 8984</strain>
    </source>
</reference>
<reference key="4">
    <citation type="journal article" date="2007" name="Mol. Plant Microbe Interact.">
        <title>Expression profiles of genes encoded by the supernumerary chromosome controlling AM-toxin biosynthesis and pathogenicity in the apple pathotype of Alternaria alternata.</title>
        <authorList>
            <person name="Harimoto Y."/>
            <person name="Hatta R."/>
            <person name="Kodama M."/>
            <person name="Yamamoto M."/>
            <person name="Otani H."/>
            <person name="Tsuge T."/>
        </authorList>
    </citation>
    <scope>FUNCTION</scope>
    <source>
        <strain>NBRC 8984</strain>
    </source>
</reference>
<reference key="5">
    <citation type="journal article" date="2013" name="FEMS Microbiol. Rev.">
        <title>Host-selective toxins produced by the plant pathogenic fungus Alternaria alternata.</title>
        <authorList>
            <person name="Tsuge T."/>
            <person name="Harimoto Y."/>
            <person name="Akimitsu K."/>
            <person name="Ohtani K."/>
            <person name="Kodama M."/>
            <person name="Akagi Y."/>
            <person name="Egusa M."/>
            <person name="Yamamoto M."/>
            <person name="Otani H."/>
        </authorList>
    </citation>
    <scope>REVIEW ON HOST-SELECTIVE TOXINS</scope>
</reference>
<accession>C9K7I3</accession>
<organism>
    <name type="scientific">Alternaria alternata</name>
    <name type="common">Alternaria rot fungus</name>
    <name type="synonym">Torula alternata</name>
    <dbReference type="NCBI Taxonomy" id="5599"/>
    <lineage>
        <taxon>Eukaryota</taxon>
        <taxon>Fungi</taxon>
        <taxon>Dikarya</taxon>
        <taxon>Ascomycota</taxon>
        <taxon>Pezizomycotina</taxon>
        <taxon>Dothideomycetes</taxon>
        <taxon>Pleosporomycetidae</taxon>
        <taxon>Pleosporales</taxon>
        <taxon>Pleosporineae</taxon>
        <taxon>Pleosporaceae</taxon>
        <taxon>Alternaria</taxon>
        <taxon>Alternaria sect. Alternaria</taxon>
        <taxon>Alternaria alternata complex</taxon>
    </lineage>
</organism>